<comment type="function">
    <text evidence="1">Catalyzes the hydrolysis of N-formyl-L-kynurenine to L-kynurenine, the second step in the kynurenine pathway of tryptophan degradation.</text>
</comment>
<comment type="catalytic activity">
    <reaction evidence="1">
        <text>N-formyl-L-kynurenine + H2O = L-kynurenine + formate + H(+)</text>
        <dbReference type="Rhea" id="RHEA:13009"/>
        <dbReference type="ChEBI" id="CHEBI:15377"/>
        <dbReference type="ChEBI" id="CHEBI:15378"/>
        <dbReference type="ChEBI" id="CHEBI:15740"/>
        <dbReference type="ChEBI" id="CHEBI:57959"/>
        <dbReference type="ChEBI" id="CHEBI:58629"/>
        <dbReference type="EC" id="3.5.1.9"/>
    </reaction>
</comment>
<comment type="cofactor">
    <cofactor evidence="1">
        <name>Zn(2+)</name>
        <dbReference type="ChEBI" id="CHEBI:29105"/>
    </cofactor>
    <text evidence="1">Binds 2 zinc ions per subunit.</text>
</comment>
<comment type="pathway">
    <text evidence="1">Amino-acid degradation; L-tryptophan degradation via kynurenine pathway; L-kynurenine from L-tryptophan: step 2/2.</text>
</comment>
<comment type="subunit">
    <text evidence="1">Homodimer.</text>
</comment>
<comment type="similarity">
    <text evidence="1">Belongs to the Cyclase 1 superfamily. KynB family.</text>
</comment>
<keyword id="KW-0378">Hydrolase</keyword>
<keyword id="KW-0479">Metal-binding</keyword>
<keyword id="KW-1185">Reference proteome</keyword>
<keyword id="KW-0823">Tryptophan catabolism</keyword>
<keyword id="KW-0862">Zinc</keyword>
<reference key="1">
    <citation type="journal article" date="2014" name="Stand. Genomic Sci.">
        <title>Complete genome sequence of Burkholderia phymatum STM815(T), a broad host range and efficient nitrogen-fixing symbiont of Mimosa species.</title>
        <authorList>
            <person name="Moulin L."/>
            <person name="Klonowska A."/>
            <person name="Caroline B."/>
            <person name="Booth K."/>
            <person name="Vriezen J.A."/>
            <person name="Melkonian R."/>
            <person name="James E.K."/>
            <person name="Young J.P."/>
            <person name="Bena G."/>
            <person name="Hauser L."/>
            <person name="Land M."/>
            <person name="Kyrpides N."/>
            <person name="Bruce D."/>
            <person name="Chain P."/>
            <person name="Copeland A."/>
            <person name="Pitluck S."/>
            <person name="Woyke T."/>
            <person name="Lizotte-Waniewski M."/>
            <person name="Bristow J."/>
            <person name="Riley M."/>
        </authorList>
    </citation>
    <scope>NUCLEOTIDE SEQUENCE [LARGE SCALE GENOMIC DNA]</scope>
    <source>
        <strain>DSM 17167 / CIP 108236 / LMG 21445 / STM815</strain>
    </source>
</reference>
<dbReference type="EC" id="3.5.1.9" evidence="1"/>
<dbReference type="EMBL" id="CP001043">
    <property type="protein sequence ID" value="ACC69700.1"/>
    <property type="molecule type" value="Genomic_DNA"/>
</dbReference>
<dbReference type="RefSeq" id="WP_012399925.1">
    <property type="nucleotide sequence ID" value="NC_010622.1"/>
</dbReference>
<dbReference type="SMR" id="B2JDS4"/>
<dbReference type="STRING" id="391038.Bphy_0508"/>
<dbReference type="KEGG" id="bph:Bphy_0508"/>
<dbReference type="eggNOG" id="COG1878">
    <property type="taxonomic scope" value="Bacteria"/>
</dbReference>
<dbReference type="HOGENOM" id="CLU_030671_3_1_4"/>
<dbReference type="OrthoDB" id="9796085at2"/>
<dbReference type="UniPathway" id="UPA00333">
    <property type="reaction ID" value="UER00454"/>
</dbReference>
<dbReference type="Proteomes" id="UP000001192">
    <property type="component" value="Chromosome 1"/>
</dbReference>
<dbReference type="GO" id="GO:0004061">
    <property type="term" value="F:arylformamidase activity"/>
    <property type="evidence" value="ECO:0000250"/>
    <property type="project" value="UniProtKB"/>
</dbReference>
<dbReference type="GO" id="GO:0004328">
    <property type="term" value="F:formamidase activity"/>
    <property type="evidence" value="ECO:0007669"/>
    <property type="project" value="InterPro"/>
</dbReference>
<dbReference type="GO" id="GO:0008270">
    <property type="term" value="F:zinc ion binding"/>
    <property type="evidence" value="ECO:0007669"/>
    <property type="project" value="UniProtKB-UniRule"/>
</dbReference>
<dbReference type="GO" id="GO:0043420">
    <property type="term" value="P:anthranilate metabolic process"/>
    <property type="evidence" value="ECO:0000250"/>
    <property type="project" value="UniProtKB"/>
</dbReference>
<dbReference type="GO" id="GO:0019441">
    <property type="term" value="P:L-tryptophan catabolic process to kynurenine"/>
    <property type="evidence" value="ECO:0000250"/>
    <property type="project" value="UniProtKB"/>
</dbReference>
<dbReference type="FunFam" id="3.50.30.50:FF:000001">
    <property type="entry name" value="Kynurenine formamidase"/>
    <property type="match status" value="1"/>
</dbReference>
<dbReference type="Gene3D" id="3.50.30.50">
    <property type="entry name" value="Putative cyclase"/>
    <property type="match status" value="1"/>
</dbReference>
<dbReference type="HAMAP" id="MF_01969">
    <property type="entry name" value="KynB"/>
    <property type="match status" value="1"/>
</dbReference>
<dbReference type="InterPro" id="IPR007325">
    <property type="entry name" value="KFase/CYL"/>
</dbReference>
<dbReference type="InterPro" id="IPR037175">
    <property type="entry name" value="KFase_sf"/>
</dbReference>
<dbReference type="InterPro" id="IPR017484">
    <property type="entry name" value="Kynurenine_formamidase_bac"/>
</dbReference>
<dbReference type="NCBIfam" id="TIGR03035">
    <property type="entry name" value="trp_arylform"/>
    <property type="match status" value="1"/>
</dbReference>
<dbReference type="PANTHER" id="PTHR31118">
    <property type="entry name" value="CYCLASE-LIKE PROTEIN 2"/>
    <property type="match status" value="1"/>
</dbReference>
<dbReference type="PANTHER" id="PTHR31118:SF32">
    <property type="entry name" value="KYNURENINE FORMAMIDASE"/>
    <property type="match status" value="1"/>
</dbReference>
<dbReference type="Pfam" id="PF04199">
    <property type="entry name" value="Cyclase"/>
    <property type="match status" value="1"/>
</dbReference>
<dbReference type="SUPFAM" id="SSF102198">
    <property type="entry name" value="Putative cyclase"/>
    <property type="match status" value="1"/>
</dbReference>
<gene>
    <name evidence="1" type="primary">kynB</name>
    <name type="ordered locus">Bphy_0508</name>
</gene>
<accession>B2JDS4</accession>
<feature type="chain" id="PRO_0000362113" description="Kynurenine formamidase">
    <location>
        <begin position="1"/>
        <end position="209"/>
    </location>
</feature>
<feature type="active site" description="Proton donor/acceptor" evidence="1">
    <location>
        <position position="58"/>
    </location>
</feature>
<feature type="binding site" evidence="1">
    <location>
        <position position="18"/>
    </location>
    <ligand>
        <name>substrate</name>
    </ligand>
</feature>
<feature type="binding site" evidence="1">
    <location>
        <position position="48"/>
    </location>
    <ligand>
        <name>Zn(2+)</name>
        <dbReference type="ChEBI" id="CHEBI:29105"/>
        <label>1</label>
    </ligand>
</feature>
<feature type="binding site" evidence="1">
    <location>
        <position position="52"/>
    </location>
    <ligand>
        <name>Zn(2+)</name>
        <dbReference type="ChEBI" id="CHEBI:29105"/>
        <label>1</label>
    </ligand>
</feature>
<feature type="binding site" evidence="1">
    <location>
        <position position="54"/>
    </location>
    <ligand>
        <name>Zn(2+)</name>
        <dbReference type="ChEBI" id="CHEBI:29105"/>
        <label>1</label>
    </ligand>
</feature>
<feature type="binding site" evidence="1">
    <location>
        <position position="54"/>
    </location>
    <ligand>
        <name>Zn(2+)</name>
        <dbReference type="ChEBI" id="CHEBI:29105"/>
        <label>2</label>
    </ligand>
</feature>
<feature type="binding site" evidence="1">
    <location>
        <position position="160"/>
    </location>
    <ligand>
        <name>Zn(2+)</name>
        <dbReference type="ChEBI" id="CHEBI:29105"/>
        <label>2</label>
    </ligand>
</feature>
<feature type="binding site" evidence="1">
    <location>
        <position position="172"/>
    </location>
    <ligand>
        <name>Zn(2+)</name>
        <dbReference type="ChEBI" id="CHEBI:29105"/>
        <label>1</label>
    </ligand>
</feature>
<feature type="binding site" evidence="1">
    <location>
        <position position="172"/>
    </location>
    <ligand>
        <name>Zn(2+)</name>
        <dbReference type="ChEBI" id="CHEBI:29105"/>
        <label>2</label>
    </ligand>
</feature>
<proteinExistence type="inferred from homology"/>
<protein>
    <recommendedName>
        <fullName evidence="1">Kynurenine formamidase</fullName>
        <shortName evidence="1">KFA</shortName>
        <shortName evidence="1">KFase</shortName>
        <ecNumber evidence="1">3.5.1.9</ecNumber>
    </recommendedName>
    <alternativeName>
        <fullName evidence="1">Arylformamidase</fullName>
    </alternativeName>
    <alternativeName>
        <fullName evidence="1">N-formylkynurenine formamidase</fullName>
        <shortName evidence="1">FKF</shortName>
    </alternativeName>
</protein>
<sequence>MDTLWDITPAVDTATPVWPGDTPVGIERVWRMEAGSPVNVARLTMSPHTGAHTDAPLHYDAGGVAIGAVPLDSYLGRCRVIHCIGVKPLVMPDDLAGSLDGVPPRVLLRTYREAPTTFWDSGFCAVAPETIDLLAARGVKLIGIDTPSLDPQESKTMDAHHRIRAHRMAILEGIVLDAVAPGDYELIALPLKLSTLDASPVRAVLRSLT</sequence>
<evidence type="ECO:0000255" key="1">
    <source>
        <dbReference type="HAMAP-Rule" id="MF_01969"/>
    </source>
</evidence>
<name>KYNB_PARP8</name>
<organism>
    <name type="scientific">Paraburkholderia phymatum (strain DSM 17167 / CIP 108236 / LMG 21445 / STM815)</name>
    <name type="common">Burkholderia phymatum</name>
    <dbReference type="NCBI Taxonomy" id="391038"/>
    <lineage>
        <taxon>Bacteria</taxon>
        <taxon>Pseudomonadati</taxon>
        <taxon>Pseudomonadota</taxon>
        <taxon>Betaproteobacteria</taxon>
        <taxon>Burkholderiales</taxon>
        <taxon>Burkholderiaceae</taxon>
        <taxon>Paraburkholderia</taxon>
    </lineage>
</organism>